<organism>
    <name type="scientific">Clostridium botulinum (strain Kyoto / Type A2)</name>
    <dbReference type="NCBI Taxonomy" id="536232"/>
    <lineage>
        <taxon>Bacteria</taxon>
        <taxon>Bacillati</taxon>
        <taxon>Bacillota</taxon>
        <taxon>Clostridia</taxon>
        <taxon>Eubacteriales</taxon>
        <taxon>Clostridiaceae</taxon>
        <taxon>Clostridium</taxon>
    </lineage>
</organism>
<evidence type="ECO:0000255" key="1">
    <source>
        <dbReference type="HAMAP-Rule" id="MF_01208"/>
    </source>
</evidence>
<reference key="1">
    <citation type="submission" date="2008-10" db="EMBL/GenBank/DDBJ databases">
        <title>Genome sequence of Clostridium botulinum A2 Kyoto.</title>
        <authorList>
            <person name="Shrivastava S."/>
            <person name="Brinkac L.M."/>
            <person name="Brown J.L."/>
            <person name="Bruce D."/>
            <person name="Detter C.C."/>
            <person name="Johnson E.A."/>
            <person name="Munk C.A."/>
            <person name="Smith L.A."/>
            <person name="Smith T.J."/>
            <person name="Sutton G."/>
            <person name="Brettin T.S."/>
        </authorList>
    </citation>
    <scope>NUCLEOTIDE SEQUENCE [LARGE SCALE GENOMIC DNA]</scope>
    <source>
        <strain>Kyoto / Type A2</strain>
    </source>
</reference>
<name>PYRE_CLOBJ</name>
<keyword id="KW-0328">Glycosyltransferase</keyword>
<keyword id="KW-0460">Magnesium</keyword>
<keyword id="KW-0665">Pyrimidine biosynthesis</keyword>
<keyword id="KW-0808">Transferase</keyword>
<protein>
    <recommendedName>
        <fullName evidence="1">Orotate phosphoribosyltransferase</fullName>
        <shortName evidence="1">OPRT</shortName>
        <shortName evidence="1">OPRTase</shortName>
        <ecNumber evidence="1">2.4.2.10</ecNumber>
    </recommendedName>
</protein>
<comment type="function">
    <text evidence="1">Catalyzes the transfer of a ribosyl phosphate group from 5-phosphoribose 1-diphosphate to orotate, leading to the formation of orotidine monophosphate (OMP).</text>
</comment>
<comment type="catalytic activity">
    <reaction evidence="1">
        <text>orotidine 5'-phosphate + diphosphate = orotate + 5-phospho-alpha-D-ribose 1-diphosphate</text>
        <dbReference type="Rhea" id="RHEA:10380"/>
        <dbReference type="ChEBI" id="CHEBI:30839"/>
        <dbReference type="ChEBI" id="CHEBI:33019"/>
        <dbReference type="ChEBI" id="CHEBI:57538"/>
        <dbReference type="ChEBI" id="CHEBI:58017"/>
        <dbReference type="EC" id="2.4.2.10"/>
    </reaction>
</comment>
<comment type="cofactor">
    <cofactor evidence="1">
        <name>Mg(2+)</name>
        <dbReference type="ChEBI" id="CHEBI:18420"/>
    </cofactor>
</comment>
<comment type="pathway">
    <text evidence="1">Pyrimidine metabolism; UMP biosynthesis via de novo pathway; UMP from orotate: step 1/2.</text>
</comment>
<comment type="subunit">
    <text evidence="1">Homodimer.</text>
</comment>
<comment type="similarity">
    <text evidence="1">Belongs to the purine/pyrimidine phosphoribosyltransferase family. PyrE subfamily.</text>
</comment>
<gene>
    <name evidence="1" type="primary">pyrE</name>
    <name type="ordered locus">CLM_3647</name>
</gene>
<sequence length="191" mass="21312">MSNINVIDILKESDALLEGHFLLSSGRHSNRYCQCAKLLQCPQKAEKVISVIAEKLKEVDFNIIVGPAMGGVIVSYELARQTNKPGIFAERKEEVMCIRRGFEIKKGDKVIISEDVVTTGKSSLEVAKVIEEMGGEVVGIACIVDRRAEDIKTNYPIYSACKLEIETYEKDNCELCKKNIPFVKPGSREQK</sequence>
<dbReference type="EC" id="2.4.2.10" evidence="1"/>
<dbReference type="EMBL" id="CP001581">
    <property type="protein sequence ID" value="ACO85092.1"/>
    <property type="molecule type" value="Genomic_DNA"/>
</dbReference>
<dbReference type="RefSeq" id="WP_003357422.1">
    <property type="nucleotide sequence ID" value="NC_012563.1"/>
</dbReference>
<dbReference type="SMR" id="C1FLB0"/>
<dbReference type="KEGG" id="cby:CLM_3647"/>
<dbReference type="eggNOG" id="COG0461">
    <property type="taxonomic scope" value="Bacteria"/>
</dbReference>
<dbReference type="HOGENOM" id="CLU_074878_3_0_9"/>
<dbReference type="UniPathway" id="UPA00070">
    <property type="reaction ID" value="UER00119"/>
</dbReference>
<dbReference type="Proteomes" id="UP000001374">
    <property type="component" value="Chromosome"/>
</dbReference>
<dbReference type="GO" id="GO:0000287">
    <property type="term" value="F:magnesium ion binding"/>
    <property type="evidence" value="ECO:0007669"/>
    <property type="project" value="UniProtKB-UniRule"/>
</dbReference>
<dbReference type="GO" id="GO:0004588">
    <property type="term" value="F:orotate phosphoribosyltransferase activity"/>
    <property type="evidence" value="ECO:0007669"/>
    <property type="project" value="UniProtKB-UniRule"/>
</dbReference>
<dbReference type="GO" id="GO:0044205">
    <property type="term" value="P:'de novo' UMP biosynthetic process"/>
    <property type="evidence" value="ECO:0007669"/>
    <property type="project" value="UniProtKB-UniRule"/>
</dbReference>
<dbReference type="GO" id="GO:0019856">
    <property type="term" value="P:pyrimidine nucleobase biosynthetic process"/>
    <property type="evidence" value="ECO:0007669"/>
    <property type="project" value="InterPro"/>
</dbReference>
<dbReference type="CDD" id="cd06223">
    <property type="entry name" value="PRTases_typeI"/>
    <property type="match status" value="1"/>
</dbReference>
<dbReference type="Gene3D" id="3.40.50.2020">
    <property type="match status" value="1"/>
</dbReference>
<dbReference type="HAMAP" id="MF_01208">
    <property type="entry name" value="PyrE"/>
    <property type="match status" value="1"/>
</dbReference>
<dbReference type="InterPro" id="IPR023031">
    <property type="entry name" value="OPRT"/>
</dbReference>
<dbReference type="InterPro" id="IPR006273">
    <property type="entry name" value="Orotate_PRibTrfase_bac"/>
</dbReference>
<dbReference type="InterPro" id="IPR000836">
    <property type="entry name" value="PRibTrfase_dom"/>
</dbReference>
<dbReference type="InterPro" id="IPR029057">
    <property type="entry name" value="PRTase-like"/>
</dbReference>
<dbReference type="NCBIfam" id="TIGR01367">
    <property type="entry name" value="pyrE_Therm"/>
    <property type="match status" value="1"/>
</dbReference>
<dbReference type="PANTHER" id="PTHR19278">
    <property type="entry name" value="OROTATE PHOSPHORIBOSYLTRANSFERASE"/>
    <property type="match status" value="1"/>
</dbReference>
<dbReference type="PANTHER" id="PTHR19278:SF9">
    <property type="entry name" value="URIDINE 5'-MONOPHOSPHATE SYNTHASE"/>
    <property type="match status" value="1"/>
</dbReference>
<dbReference type="Pfam" id="PF00156">
    <property type="entry name" value="Pribosyltran"/>
    <property type="match status" value="1"/>
</dbReference>
<dbReference type="SUPFAM" id="SSF53271">
    <property type="entry name" value="PRTase-like"/>
    <property type="match status" value="1"/>
</dbReference>
<accession>C1FLB0</accession>
<feature type="chain" id="PRO_1000164679" description="Orotate phosphoribosyltransferase">
    <location>
        <begin position="1"/>
        <end position="191"/>
    </location>
</feature>
<feature type="binding site" evidence="1">
    <location>
        <begin position="114"/>
        <end position="122"/>
    </location>
    <ligand>
        <name>5-phospho-alpha-D-ribose 1-diphosphate</name>
        <dbReference type="ChEBI" id="CHEBI:58017"/>
    </ligand>
</feature>
<feature type="binding site" evidence="1">
    <location>
        <position position="118"/>
    </location>
    <ligand>
        <name>orotate</name>
        <dbReference type="ChEBI" id="CHEBI:30839"/>
    </ligand>
</feature>
<feature type="binding site" evidence="1">
    <location>
        <position position="146"/>
    </location>
    <ligand>
        <name>orotate</name>
        <dbReference type="ChEBI" id="CHEBI:30839"/>
    </ligand>
</feature>
<proteinExistence type="inferred from homology"/>